<sequence length="103" mass="11673">MERIRLKLKAYDHRVLDRTVAAIVEAVKRTGADIRGPIPMPTKIKRYTVLKSPHINKDSREQFEIRIHARMLDIVAATPDTVDSLTKLDLAPEVSVEVRAMGK</sequence>
<comment type="function">
    <text evidence="1">Involved in the binding of tRNA to the ribosomes.</text>
</comment>
<comment type="subunit">
    <text evidence="1">Part of the 30S ribosomal subunit.</text>
</comment>
<comment type="similarity">
    <text evidence="1">Belongs to the universal ribosomal protein uS10 family.</text>
</comment>
<proteinExistence type="inferred from homology"/>
<accession>A1W1W1</accession>
<gene>
    <name evidence="1" type="primary">rpsJ</name>
    <name type="ordered locus">CJJ81176_0002</name>
</gene>
<feature type="chain" id="PRO_1000015007" description="Small ribosomal subunit protein uS10">
    <location>
        <begin position="1"/>
        <end position="103"/>
    </location>
</feature>
<dbReference type="EMBL" id="CP000538">
    <property type="protein sequence ID" value="EAQ72006.1"/>
    <property type="molecule type" value="Genomic_DNA"/>
</dbReference>
<dbReference type="RefSeq" id="WP_002779353.1">
    <property type="nucleotide sequence ID" value="NC_008787.1"/>
</dbReference>
<dbReference type="SMR" id="A1W1W1"/>
<dbReference type="GeneID" id="98395699"/>
<dbReference type="KEGG" id="cjj:CJJ81176_0002"/>
<dbReference type="eggNOG" id="COG0051">
    <property type="taxonomic scope" value="Bacteria"/>
</dbReference>
<dbReference type="HOGENOM" id="CLU_122625_1_2_7"/>
<dbReference type="Proteomes" id="UP000000646">
    <property type="component" value="Chromosome"/>
</dbReference>
<dbReference type="GO" id="GO:1990904">
    <property type="term" value="C:ribonucleoprotein complex"/>
    <property type="evidence" value="ECO:0007669"/>
    <property type="project" value="UniProtKB-KW"/>
</dbReference>
<dbReference type="GO" id="GO:0005840">
    <property type="term" value="C:ribosome"/>
    <property type="evidence" value="ECO:0007669"/>
    <property type="project" value="UniProtKB-KW"/>
</dbReference>
<dbReference type="GO" id="GO:0003735">
    <property type="term" value="F:structural constituent of ribosome"/>
    <property type="evidence" value="ECO:0007669"/>
    <property type="project" value="InterPro"/>
</dbReference>
<dbReference type="GO" id="GO:0000049">
    <property type="term" value="F:tRNA binding"/>
    <property type="evidence" value="ECO:0007669"/>
    <property type="project" value="UniProtKB-UniRule"/>
</dbReference>
<dbReference type="GO" id="GO:0006412">
    <property type="term" value="P:translation"/>
    <property type="evidence" value="ECO:0007669"/>
    <property type="project" value="UniProtKB-UniRule"/>
</dbReference>
<dbReference type="FunFam" id="3.30.70.600:FF:000003">
    <property type="entry name" value="30S ribosomal protein S10"/>
    <property type="match status" value="1"/>
</dbReference>
<dbReference type="Gene3D" id="3.30.70.600">
    <property type="entry name" value="Ribosomal protein S10 domain"/>
    <property type="match status" value="1"/>
</dbReference>
<dbReference type="HAMAP" id="MF_00508">
    <property type="entry name" value="Ribosomal_uS10"/>
    <property type="match status" value="1"/>
</dbReference>
<dbReference type="InterPro" id="IPR001848">
    <property type="entry name" value="Ribosomal_uS10"/>
</dbReference>
<dbReference type="InterPro" id="IPR018268">
    <property type="entry name" value="Ribosomal_uS10_CS"/>
</dbReference>
<dbReference type="InterPro" id="IPR027486">
    <property type="entry name" value="Ribosomal_uS10_dom"/>
</dbReference>
<dbReference type="InterPro" id="IPR036838">
    <property type="entry name" value="Ribosomal_uS10_dom_sf"/>
</dbReference>
<dbReference type="NCBIfam" id="NF001861">
    <property type="entry name" value="PRK00596.1"/>
    <property type="match status" value="1"/>
</dbReference>
<dbReference type="NCBIfam" id="TIGR01049">
    <property type="entry name" value="rpsJ_bact"/>
    <property type="match status" value="1"/>
</dbReference>
<dbReference type="PANTHER" id="PTHR11700">
    <property type="entry name" value="30S RIBOSOMAL PROTEIN S10 FAMILY MEMBER"/>
    <property type="match status" value="1"/>
</dbReference>
<dbReference type="Pfam" id="PF00338">
    <property type="entry name" value="Ribosomal_S10"/>
    <property type="match status" value="1"/>
</dbReference>
<dbReference type="PRINTS" id="PR00971">
    <property type="entry name" value="RIBOSOMALS10"/>
</dbReference>
<dbReference type="SMART" id="SM01403">
    <property type="entry name" value="Ribosomal_S10"/>
    <property type="match status" value="1"/>
</dbReference>
<dbReference type="SUPFAM" id="SSF54999">
    <property type="entry name" value="Ribosomal protein S10"/>
    <property type="match status" value="1"/>
</dbReference>
<dbReference type="PROSITE" id="PS00361">
    <property type="entry name" value="RIBOSOMAL_S10"/>
    <property type="match status" value="1"/>
</dbReference>
<name>RS10_CAMJJ</name>
<keyword id="KW-0687">Ribonucleoprotein</keyword>
<keyword id="KW-0689">Ribosomal protein</keyword>
<protein>
    <recommendedName>
        <fullName evidence="1">Small ribosomal subunit protein uS10</fullName>
    </recommendedName>
    <alternativeName>
        <fullName evidence="2">30S ribosomal protein S10</fullName>
    </alternativeName>
</protein>
<evidence type="ECO:0000255" key="1">
    <source>
        <dbReference type="HAMAP-Rule" id="MF_00508"/>
    </source>
</evidence>
<evidence type="ECO:0000305" key="2"/>
<reference key="1">
    <citation type="submission" date="2006-12" db="EMBL/GenBank/DDBJ databases">
        <authorList>
            <person name="Fouts D.E."/>
            <person name="Nelson K.E."/>
            <person name="Sebastian Y."/>
        </authorList>
    </citation>
    <scope>NUCLEOTIDE SEQUENCE [LARGE SCALE GENOMIC DNA]</scope>
    <source>
        <strain>81-176</strain>
    </source>
</reference>
<organism>
    <name type="scientific">Campylobacter jejuni subsp. jejuni serotype O:23/36 (strain 81-176)</name>
    <dbReference type="NCBI Taxonomy" id="354242"/>
    <lineage>
        <taxon>Bacteria</taxon>
        <taxon>Pseudomonadati</taxon>
        <taxon>Campylobacterota</taxon>
        <taxon>Epsilonproteobacteria</taxon>
        <taxon>Campylobacterales</taxon>
        <taxon>Campylobacteraceae</taxon>
        <taxon>Campylobacter</taxon>
    </lineage>
</organism>